<gene>
    <name type="primary">RpL18</name>
</gene>
<proteinExistence type="evidence at transcript level"/>
<keyword id="KW-0963">Cytoplasm</keyword>
<keyword id="KW-1185">Reference proteome</keyword>
<keyword id="KW-0687">Ribonucleoprotein</keyword>
<keyword id="KW-0689">Ribosomal protein</keyword>
<dbReference type="EMBL" id="AY769287">
    <property type="protein sequence ID" value="AAV34829.1"/>
    <property type="molecule type" value="mRNA"/>
</dbReference>
<dbReference type="RefSeq" id="NP_001037217.1">
    <property type="nucleotide sequence ID" value="NM_001043752.1"/>
</dbReference>
<dbReference type="SMR" id="Q5UAS1"/>
<dbReference type="FunCoup" id="Q5UAS1">
    <property type="interactions" value="1200"/>
</dbReference>
<dbReference type="STRING" id="7091.Q5UAS1"/>
<dbReference type="PaxDb" id="7091-BGIBMGA011620-TA"/>
<dbReference type="EnsemblMetazoa" id="NM_001043752.1">
    <property type="protein sequence ID" value="NP_001037217.1"/>
    <property type="gene ID" value="GeneID_692694"/>
</dbReference>
<dbReference type="GeneID" id="692694"/>
<dbReference type="KEGG" id="bmor:692694"/>
<dbReference type="CTD" id="6141"/>
<dbReference type="eggNOG" id="KOG1714">
    <property type="taxonomic scope" value="Eukaryota"/>
</dbReference>
<dbReference type="HOGENOM" id="CLU_080024_0_0_1"/>
<dbReference type="InParanoid" id="Q5UAS1"/>
<dbReference type="OMA" id="IDICHKN"/>
<dbReference type="OrthoDB" id="337432at7088"/>
<dbReference type="Proteomes" id="UP000005204">
    <property type="component" value="Unassembled WGS sequence"/>
</dbReference>
<dbReference type="GO" id="GO:0022625">
    <property type="term" value="C:cytosolic large ribosomal subunit"/>
    <property type="evidence" value="ECO:0007669"/>
    <property type="project" value="TreeGrafter"/>
</dbReference>
<dbReference type="GO" id="GO:0003723">
    <property type="term" value="F:RNA binding"/>
    <property type="evidence" value="ECO:0007669"/>
    <property type="project" value="TreeGrafter"/>
</dbReference>
<dbReference type="GO" id="GO:0003735">
    <property type="term" value="F:structural constituent of ribosome"/>
    <property type="evidence" value="ECO:0007669"/>
    <property type="project" value="InterPro"/>
</dbReference>
<dbReference type="GO" id="GO:0006412">
    <property type="term" value="P:translation"/>
    <property type="evidence" value="ECO:0007669"/>
    <property type="project" value="InterPro"/>
</dbReference>
<dbReference type="FunFam" id="3.100.10.10:FF:000001">
    <property type="entry name" value="60S ribosomal protein L18"/>
    <property type="match status" value="1"/>
</dbReference>
<dbReference type="Gene3D" id="3.100.10.10">
    <property type="match status" value="1"/>
</dbReference>
<dbReference type="InterPro" id="IPR000039">
    <property type="entry name" value="Ribosomal_eL18"/>
</dbReference>
<dbReference type="InterPro" id="IPR021132">
    <property type="entry name" value="Ribosomal_eL18/eL18-A/B/_CS"/>
</dbReference>
<dbReference type="InterPro" id="IPR021131">
    <property type="entry name" value="Ribosomal_uL15/eL18"/>
</dbReference>
<dbReference type="InterPro" id="IPR036227">
    <property type="entry name" value="Ribosomal_uL15/eL18_sf"/>
</dbReference>
<dbReference type="PANTHER" id="PTHR10934">
    <property type="entry name" value="60S RIBOSOMAL PROTEIN L18"/>
    <property type="match status" value="1"/>
</dbReference>
<dbReference type="PANTHER" id="PTHR10934:SF2">
    <property type="entry name" value="LARGE RIBOSOMAL SUBUNIT PROTEIN EL18"/>
    <property type="match status" value="1"/>
</dbReference>
<dbReference type="Pfam" id="PF17135">
    <property type="entry name" value="Ribosomal_L18"/>
    <property type="match status" value="1"/>
</dbReference>
<dbReference type="SUPFAM" id="SSF52080">
    <property type="entry name" value="Ribosomal proteins L15p and L18e"/>
    <property type="match status" value="1"/>
</dbReference>
<dbReference type="PROSITE" id="PS01106">
    <property type="entry name" value="RIBOSOMAL_L18E"/>
    <property type="match status" value="1"/>
</dbReference>
<feature type="chain" id="PRO_0000291626" description="Large ribosomal subunit protein eL18">
    <location>
        <begin position="1"/>
        <end position="183"/>
    </location>
</feature>
<feature type="region of interest" description="Disordered" evidence="2">
    <location>
        <begin position="150"/>
        <end position="183"/>
    </location>
</feature>
<comment type="subcellular location">
    <subcellularLocation>
        <location evidence="1">Cytoplasm</location>
    </subcellularLocation>
</comment>
<comment type="similarity">
    <text evidence="3">Belongs to the eukaryotic ribosomal protein eL18 family.</text>
</comment>
<reference key="1">
    <citation type="submission" date="2004-09" db="EMBL/GenBank/DDBJ databases">
        <title>Ribosomal proteins of Bombyx mori.</title>
        <authorList>
            <person name="Heckel D.G."/>
            <person name="Morgan M."/>
            <person name="Shimada T."/>
            <person name="Mita K."/>
        </authorList>
    </citation>
    <scope>NUCLEOTIDE SEQUENCE [MRNA]</scope>
    <source>
        <strain>C108</strain>
    </source>
</reference>
<evidence type="ECO:0000250" key="1"/>
<evidence type="ECO:0000256" key="2">
    <source>
        <dbReference type="SAM" id="MobiDB-lite"/>
    </source>
</evidence>
<evidence type="ECO:0000305" key="3"/>
<organism>
    <name type="scientific">Bombyx mori</name>
    <name type="common">Silk moth</name>
    <dbReference type="NCBI Taxonomy" id="7091"/>
    <lineage>
        <taxon>Eukaryota</taxon>
        <taxon>Metazoa</taxon>
        <taxon>Ecdysozoa</taxon>
        <taxon>Arthropoda</taxon>
        <taxon>Hexapoda</taxon>
        <taxon>Insecta</taxon>
        <taxon>Pterygota</taxon>
        <taxon>Neoptera</taxon>
        <taxon>Endopterygota</taxon>
        <taxon>Lepidoptera</taxon>
        <taxon>Glossata</taxon>
        <taxon>Ditrysia</taxon>
        <taxon>Bombycoidea</taxon>
        <taxon>Bombycidae</taxon>
        <taxon>Bombycinae</taxon>
        <taxon>Bombyx</taxon>
    </lineage>
</organism>
<accession>Q5UAS1</accession>
<protein>
    <recommendedName>
        <fullName evidence="3">Large ribosomal subunit protein eL18</fullName>
    </recommendedName>
    <alternativeName>
        <fullName>60S ribosomal protein L18</fullName>
    </alternativeName>
</protein>
<name>RL18_BOMMO</name>
<sequence>MGIDINHKHDRKVRRTEVKSQDIYLRLLVKLYRYLARRTNAKFNQIVLRRLFMSRINRPPISVSRLARHMKKPTREGLIAVVVGTVTNDVRLYKIPKMTVAALHVTEKARARILAAGGEILTFDQLALRAPTGKKTVLVQGQRNAREAVRHFGPAPGAPRSHTKPYVRTKGHEKARPSRRANV</sequence>